<comment type="function">
    <text evidence="1">Participates in chromosomal partition during cell division. May act via the formation of a condensin-like complex containing Smc and ScpB that pull DNA away from mid-cell into both cell halves.</text>
</comment>
<comment type="subunit">
    <text evidence="1">Component of a cohesin-like complex composed of ScpA, ScpB and the Smc homodimer, in which ScpA and ScpB bind to the head domain of Smc. The presence of the three proteins is required for the association of the complex with DNA.</text>
</comment>
<comment type="subcellular location">
    <subcellularLocation>
        <location evidence="1">Cytoplasm</location>
    </subcellularLocation>
    <text evidence="1">Associated with two foci at the outer edges of the nucleoid region in young cells, and at four foci within both cell halves in older cells.</text>
</comment>
<comment type="similarity">
    <text evidence="1">Belongs to the ScpA family.</text>
</comment>
<keyword id="KW-0131">Cell cycle</keyword>
<keyword id="KW-0132">Cell division</keyword>
<keyword id="KW-0159">Chromosome partition</keyword>
<keyword id="KW-0963">Cytoplasm</keyword>
<keyword id="KW-1185">Reference proteome</keyword>
<gene>
    <name evidence="1" type="primary">scpA</name>
    <name type="ordered locus">LL1277</name>
    <name type="ORF">L108989</name>
</gene>
<reference key="1">
    <citation type="journal article" date="2001" name="Genome Res.">
        <title>The complete genome sequence of the lactic acid bacterium Lactococcus lactis ssp. lactis IL1403.</title>
        <authorList>
            <person name="Bolotin A."/>
            <person name="Wincker P."/>
            <person name="Mauger S."/>
            <person name="Jaillon O."/>
            <person name="Malarme K."/>
            <person name="Weissenbach J."/>
            <person name="Ehrlich S.D."/>
            <person name="Sorokin A."/>
        </authorList>
    </citation>
    <scope>NUCLEOTIDE SEQUENCE [LARGE SCALE GENOMIC DNA]</scope>
    <source>
        <strain>IL1403</strain>
    </source>
</reference>
<proteinExistence type="inferred from homology"/>
<protein>
    <recommendedName>
        <fullName evidence="1">Segregation and condensation protein A</fullName>
    </recommendedName>
</protein>
<evidence type="ECO:0000255" key="1">
    <source>
        <dbReference type="HAMAP-Rule" id="MF_01805"/>
    </source>
</evidence>
<name>SCPA_LACLA</name>
<feature type="chain" id="PRO_0000211086" description="Segregation and condensation protein A">
    <location>
        <begin position="1"/>
        <end position="242"/>
    </location>
</feature>
<accession>Q9CG33</accession>
<sequence length="242" mass="28428">MIKEINIKIKNFEGPLDLLLHLVSQYEMDIFEVPLVPVIEQYLIYIQTMKELELEVAGEYMLMASQLMLIKSRRLLPTVTETFIEDTEQLEYDLLAQIDEYRKYKMLSQDLDELHQERSHFYSKAKTEIITDETVLLQDKSALDLFLAFTKILELQRQHFQDENTKIAAEKFTIADKILELSTRFTEQKICKFSDLFSSSTNKDELVTTFMALLELIKNQQISFSQGELFGEIILERKETSE</sequence>
<dbReference type="EMBL" id="AE005176">
    <property type="protein sequence ID" value="AAK05375.1"/>
    <property type="molecule type" value="Genomic_DNA"/>
</dbReference>
<dbReference type="PIR" id="E86784">
    <property type="entry name" value="E86784"/>
</dbReference>
<dbReference type="RefSeq" id="NP_267433.1">
    <property type="nucleotide sequence ID" value="NC_002662.1"/>
</dbReference>
<dbReference type="RefSeq" id="WP_003130199.1">
    <property type="nucleotide sequence ID" value="NC_002662.1"/>
</dbReference>
<dbReference type="SMR" id="Q9CG33"/>
<dbReference type="PaxDb" id="272623-L108989"/>
<dbReference type="DNASU" id="1114926"/>
<dbReference type="EnsemblBacteria" id="AAK05375">
    <property type="protein sequence ID" value="AAK05375"/>
    <property type="gene ID" value="L108989"/>
</dbReference>
<dbReference type="KEGG" id="lla:L108989"/>
<dbReference type="PATRIC" id="fig|272623.7.peg.1380"/>
<dbReference type="eggNOG" id="COG1354">
    <property type="taxonomic scope" value="Bacteria"/>
</dbReference>
<dbReference type="HOGENOM" id="CLU_038686_3_3_9"/>
<dbReference type="OrthoDB" id="9811016at2"/>
<dbReference type="Proteomes" id="UP000002196">
    <property type="component" value="Chromosome"/>
</dbReference>
<dbReference type="GO" id="GO:0005737">
    <property type="term" value="C:cytoplasm"/>
    <property type="evidence" value="ECO:0007669"/>
    <property type="project" value="UniProtKB-SubCell"/>
</dbReference>
<dbReference type="GO" id="GO:0051301">
    <property type="term" value="P:cell division"/>
    <property type="evidence" value="ECO:0007669"/>
    <property type="project" value="UniProtKB-KW"/>
</dbReference>
<dbReference type="GO" id="GO:0007059">
    <property type="term" value="P:chromosome segregation"/>
    <property type="evidence" value="ECO:0007669"/>
    <property type="project" value="UniProtKB-UniRule"/>
</dbReference>
<dbReference type="GO" id="GO:0006260">
    <property type="term" value="P:DNA replication"/>
    <property type="evidence" value="ECO:0007669"/>
    <property type="project" value="UniProtKB-UniRule"/>
</dbReference>
<dbReference type="Gene3D" id="6.10.250.2410">
    <property type="match status" value="1"/>
</dbReference>
<dbReference type="Gene3D" id="1.10.10.580">
    <property type="entry name" value="Structural maintenance of chromosome 1. Chain E"/>
    <property type="match status" value="1"/>
</dbReference>
<dbReference type="HAMAP" id="MF_01805">
    <property type="entry name" value="ScpA"/>
    <property type="match status" value="1"/>
</dbReference>
<dbReference type="InterPro" id="IPR003768">
    <property type="entry name" value="ScpA"/>
</dbReference>
<dbReference type="InterPro" id="IPR023093">
    <property type="entry name" value="ScpA-like_C"/>
</dbReference>
<dbReference type="NCBIfam" id="NF000993">
    <property type="entry name" value="PRK00104.1-2"/>
    <property type="match status" value="1"/>
</dbReference>
<dbReference type="PANTHER" id="PTHR33969">
    <property type="entry name" value="SEGREGATION AND CONDENSATION PROTEIN A"/>
    <property type="match status" value="1"/>
</dbReference>
<dbReference type="PANTHER" id="PTHR33969:SF2">
    <property type="entry name" value="SEGREGATION AND CONDENSATION PROTEIN A"/>
    <property type="match status" value="1"/>
</dbReference>
<dbReference type="Pfam" id="PF02616">
    <property type="entry name" value="SMC_ScpA"/>
    <property type="match status" value="1"/>
</dbReference>
<organism>
    <name type="scientific">Lactococcus lactis subsp. lactis (strain IL1403)</name>
    <name type="common">Streptococcus lactis</name>
    <dbReference type="NCBI Taxonomy" id="272623"/>
    <lineage>
        <taxon>Bacteria</taxon>
        <taxon>Bacillati</taxon>
        <taxon>Bacillota</taxon>
        <taxon>Bacilli</taxon>
        <taxon>Lactobacillales</taxon>
        <taxon>Streptococcaceae</taxon>
        <taxon>Lactococcus</taxon>
    </lineage>
</organism>